<accession>A7MUE7</accession>
<organism>
    <name type="scientific">Vibrio campbellii (strain ATCC BAA-1116)</name>
    <dbReference type="NCBI Taxonomy" id="2902295"/>
    <lineage>
        <taxon>Bacteria</taxon>
        <taxon>Pseudomonadati</taxon>
        <taxon>Pseudomonadota</taxon>
        <taxon>Gammaproteobacteria</taxon>
        <taxon>Vibrionales</taxon>
        <taxon>Vibrionaceae</taxon>
        <taxon>Vibrio</taxon>
    </lineage>
</organism>
<proteinExistence type="inferred from homology"/>
<protein>
    <recommendedName>
        <fullName evidence="1">Adenine phosphoribosyltransferase</fullName>
        <shortName evidence="1">APRT</shortName>
        <ecNumber evidence="1">2.4.2.7</ecNumber>
    </recommendedName>
</protein>
<feature type="chain" id="PRO_1000000370" description="Adenine phosphoribosyltransferase">
    <location>
        <begin position="1"/>
        <end position="181"/>
    </location>
</feature>
<evidence type="ECO:0000255" key="1">
    <source>
        <dbReference type="HAMAP-Rule" id="MF_00004"/>
    </source>
</evidence>
<comment type="function">
    <text evidence="1">Catalyzes a salvage reaction resulting in the formation of AMP, that is energically less costly than de novo synthesis.</text>
</comment>
<comment type="catalytic activity">
    <reaction evidence="1">
        <text>AMP + diphosphate = 5-phospho-alpha-D-ribose 1-diphosphate + adenine</text>
        <dbReference type="Rhea" id="RHEA:16609"/>
        <dbReference type="ChEBI" id="CHEBI:16708"/>
        <dbReference type="ChEBI" id="CHEBI:33019"/>
        <dbReference type="ChEBI" id="CHEBI:58017"/>
        <dbReference type="ChEBI" id="CHEBI:456215"/>
        <dbReference type="EC" id="2.4.2.7"/>
    </reaction>
</comment>
<comment type="pathway">
    <text evidence="1">Purine metabolism; AMP biosynthesis via salvage pathway; AMP from adenine: step 1/1.</text>
</comment>
<comment type="subunit">
    <text evidence="1">Homodimer.</text>
</comment>
<comment type="subcellular location">
    <subcellularLocation>
        <location evidence="1">Cytoplasm</location>
    </subcellularLocation>
</comment>
<comment type="similarity">
    <text evidence="1">Belongs to the purine/pyrimidine phosphoribosyltransferase family.</text>
</comment>
<dbReference type="EC" id="2.4.2.7" evidence="1"/>
<dbReference type="EMBL" id="CP000789">
    <property type="protein sequence ID" value="ABU72037.1"/>
    <property type="molecule type" value="Genomic_DNA"/>
</dbReference>
<dbReference type="RefSeq" id="WP_012128595.1">
    <property type="nucleotide sequence ID" value="NC_009783.1"/>
</dbReference>
<dbReference type="SMR" id="A7MUE7"/>
<dbReference type="KEGG" id="vha:VIBHAR_03088"/>
<dbReference type="PATRIC" id="fig|338187.25.peg.3100"/>
<dbReference type="UniPathway" id="UPA00588">
    <property type="reaction ID" value="UER00646"/>
</dbReference>
<dbReference type="Proteomes" id="UP000008152">
    <property type="component" value="Chromosome I"/>
</dbReference>
<dbReference type="GO" id="GO:0005737">
    <property type="term" value="C:cytoplasm"/>
    <property type="evidence" value="ECO:0007669"/>
    <property type="project" value="UniProtKB-SubCell"/>
</dbReference>
<dbReference type="GO" id="GO:0002055">
    <property type="term" value="F:adenine binding"/>
    <property type="evidence" value="ECO:0007669"/>
    <property type="project" value="TreeGrafter"/>
</dbReference>
<dbReference type="GO" id="GO:0003999">
    <property type="term" value="F:adenine phosphoribosyltransferase activity"/>
    <property type="evidence" value="ECO:0007669"/>
    <property type="project" value="UniProtKB-UniRule"/>
</dbReference>
<dbReference type="GO" id="GO:0016208">
    <property type="term" value="F:AMP binding"/>
    <property type="evidence" value="ECO:0007669"/>
    <property type="project" value="TreeGrafter"/>
</dbReference>
<dbReference type="GO" id="GO:0006168">
    <property type="term" value="P:adenine salvage"/>
    <property type="evidence" value="ECO:0007669"/>
    <property type="project" value="InterPro"/>
</dbReference>
<dbReference type="GO" id="GO:0044209">
    <property type="term" value="P:AMP salvage"/>
    <property type="evidence" value="ECO:0007669"/>
    <property type="project" value="UniProtKB-UniRule"/>
</dbReference>
<dbReference type="GO" id="GO:0006166">
    <property type="term" value="P:purine ribonucleoside salvage"/>
    <property type="evidence" value="ECO:0007669"/>
    <property type="project" value="UniProtKB-KW"/>
</dbReference>
<dbReference type="CDD" id="cd06223">
    <property type="entry name" value="PRTases_typeI"/>
    <property type="match status" value="1"/>
</dbReference>
<dbReference type="FunFam" id="3.40.50.2020:FF:000004">
    <property type="entry name" value="Adenine phosphoribosyltransferase"/>
    <property type="match status" value="1"/>
</dbReference>
<dbReference type="Gene3D" id="3.40.50.2020">
    <property type="match status" value="1"/>
</dbReference>
<dbReference type="HAMAP" id="MF_00004">
    <property type="entry name" value="Aden_phosphoribosyltr"/>
    <property type="match status" value="1"/>
</dbReference>
<dbReference type="InterPro" id="IPR005764">
    <property type="entry name" value="Ade_phspho_trans"/>
</dbReference>
<dbReference type="InterPro" id="IPR000836">
    <property type="entry name" value="PRibTrfase_dom"/>
</dbReference>
<dbReference type="InterPro" id="IPR029057">
    <property type="entry name" value="PRTase-like"/>
</dbReference>
<dbReference type="InterPro" id="IPR050054">
    <property type="entry name" value="UPRTase/APRTase"/>
</dbReference>
<dbReference type="NCBIfam" id="TIGR01090">
    <property type="entry name" value="apt"/>
    <property type="match status" value="1"/>
</dbReference>
<dbReference type="NCBIfam" id="NF002632">
    <property type="entry name" value="PRK02304.1-1"/>
    <property type="match status" value="1"/>
</dbReference>
<dbReference type="NCBIfam" id="NF002634">
    <property type="entry name" value="PRK02304.1-3"/>
    <property type="match status" value="1"/>
</dbReference>
<dbReference type="NCBIfam" id="NF002636">
    <property type="entry name" value="PRK02304.1-5"/>
    <property type="match status" value="1"/>
</dbReference>
<dbReference type="PANTHER" id="PTHR32315">
    <property type="entry name" value="ADENINE PHOSPHORIBOSYLTRANSFERASE"/>
    <property type="match status" value="1"/>
</dbReference>
<dbReference type="PANTHER" id="PTHR32315:SF3">
    <property type="entry name" value="ADENINE PHOSPHORIBOSYLTRANSFERASE"/>
    <property type="match status" value="1"/>
</dbReference>
<dbReference type="Pfam" id="PF00156">
    <property type="entry name" value="Pribosyltran"/>
    <property type="match status" value="1"/>
</dbReference>
<dbReference type="SUPFAM" id="SSF53271">
    <property type="entry name" value="PRTase-like"/>
    <property type="match status" value="1"/>
</dbReference>
<dbReference type="PROSITE" id="PS00103">
    <property type="entry name" value="PUR_PYR_PR_TRANSFER"/>
    <property type="match status" value="1"/>
</dbReference>
<reference key="1">
    <citation type="submission" date="2007-08" db="EMBL/GenBank/DDBJ databases">
        <authorList>
            <consortium name="The Vibrio harveyi Genome Sequencing Project"/>
            <person name="Bassler B."/>
            <person name="Clifton S.W."/>
            <person name="Fulton L."/>
            <person name="Delehaunty K."/>
            <person name="Fronick C."/>
            <person name="Harrison M."/>
            <person name="Markivic C."/>
            <person name="Fulton R."/>
            <person name="Tin-Wollam A.-M."/>
            <person name="Shah N."/>
            <person name="Pepin K."/>
            <person name="Nash W."/>
            <person name="Thiruvilangam P."/>
            <person name="Bhonagiri V."/>
            <person name="Waters C."/>
            <person name="Tu K.C."/>
            <person name="Irgon J."/>
            <person name="Wilson R.K."/>
        </authorList>
    </citation>
    <scope>NUCLEOTIDE SEQUENCE [LARGE SCALE GENOMIC DNA]</scope>
    <source>
        <strain>ATCC BAA-1116 / BB120</strain>
    </source>
</reference>
<sequence>MTTETISLIRSSIKSIQDYPKPGILFRDVTSLLEDAKAYQATINLLVDRYKDMGFTKVVGTEARGFLFGAPLALELGVGFVPVRKPGKLPRPTIAQSYELEYGVDTLEIHTDAIVEGDKVLVVDDLLATGGTIEATTKLIRQLGGEVEHAAFVINLPEIGGDKRLEGLGLNVYSICEFEGH</sequence>
<name>APT_VIBC1</name>
<gene>
    <name evidence="1" type="primary">apt</name>
    <name type="ordered locus">VIBHAR_03088</name>
</gene>
<keyword id="KW-0963">Cytoplasm</keyword>
<keyword id="KW-0328">Glycosyltransferase</keyword>
<keyword id="KW-0660">Purine salvage</keyword>
<keyword id="KW-0808">Transferase</keyword>